<sequence length="352" mass="37454">MIKISIDAMGGDFGPEVVIPGAAKALERHPDIRFIFFGLPAQVEPVLARYPKLKAASEFRASQVAISMDDKPSQALRAGRGKSSMWQAIEAVKTGDAQACISAGNTGALMAMSKFCLRMMSDVERPAIAGIWPTLRGESIVLDVGATIGADARQLVDYAVMGAGMARALFEVRKPTVGLLNVGTEEVKGLDEIKEAGQILRDTPLDGLAYSGFVEGNDIGKGTVDVVVTEGFTGNIALKAAEGTARQMGELLRQAMRRTLLAKIGYVFAKGAFDRLREKMDPNKVNGGVFLGLSGIVIKSHGSANAEGFCSAVEVGYDMVRNRLLEKIEADLAHFHHSHPHVSNDGGEAAKA</sequence>
<gene>
    <name evidence="1" type="primary">plsX</name>
    <name type="ordered locus">Oant_2520</name>
</gene>
<name>PLSX_BRUA4</name>
<comment type="function">
    <text evidence="1">Catalyzes the reversible formation of acyl-phosphate (acyl-PO(4)) from acyl-[acyl-carrier-protein] (acyl-ACP). This enzyme utilizes acyl-ACP as fatty acyl donor, but not acyl-CoA.</text>
</comment>
<comment type="catalytic activity">
    <reaction evidence="1">
        <text>a fatty acyl-[ACP] + phosphate = an acyl phosphate + holo-[ACP]</text>
        <dbReference type="Rhea" id="RHEA:42292"/>
        <dbReference type="Rhea" id="RHEA-COMP:9685"/>
        <dbReference type="Rhea" id="RHEA-COMP:14125"/>
        <dbReference type="ChEBI" id="CHEBI:43474"/>
        <dbReference type="ChEBI" id="CHEBI:59918"/>
        <dbReference type="ChEBI" id="CHEBI:64479"/>
        <dbReference type="ChEBI" id="CHEBI:138651"/>
        <dbReference type="EC" id="2.3.1.274"/>
    </reaction>
</comment>
<comment type="pathway">
    <text evidence="1">Lipid metabolism; phospholipid metabolism.</text>
</comment>
<comment type="subunit">
    <text evidence="1">Homodimer. Probably interacts with PlsY.</text>
</comment>
<comment type="subcellular location">
    <subcellularLocation>
        <location evidence="1">Cytoplasm</location>
    </subcellularLocation>
    <text evidence="1">Associated with the membrane possibly through PlsY.</text>
</comment>
<comment type="similarity">
    <text evidence="1">Belongs to the PlsX family.</text>
</comment>
<feature type="chain" id="PRO_1000001797" description="Phosphate acyltransferase">
    <location>
        <begin position="1"/>
        <end position="352"/>
    </location>
</feature>
<proteinExistence type="inferred from homology"/>
<protein>
    <recommendedName>
        <fullName evidence="1">Phosphate acyltransferase</fullName>
        <ecNumber evidence="1">2.3.1.274</ecNumber>
    </recommendedName>
    <alternativeName>
        <fullName evidence="1">Acyl-ACP phosphotransacylase</fullName>
    </alternativeName>
    <alternativeName>
        <fullName evidence="1">Acyl-[acyl-carrier-protein]--phosphate acyltransferase</fullName>
    </alternativeName>
    <alternativeName>
        <fullName evidence="1">Phosphate-acyl-ACP acyltransferase</fullName>
    </alternativeName>
</protein>
<keyword id="KW-0963">Cytoplasm</keyword>
<keyword id="KW-0444">Lipid biosynthesis</keyword>
<keyword id="KW-0443">Lipid metabolism</keyword>
<keyword id="KW-0594">Phospholipid biosynthesis</keyword>
<keyword id="KW-1208">Phospholipid metabolism</keyword>
<keyword id="KW-1185">Reference proteome</keyword>
<keyword id="KW-0808">Transferase</keyword>
<organism>
    <name type="scientific">Brucella anthropi (strain ATCC 49188 / DSM 6882 / CCUG 24695 / JCM 21032 / LMG 3331 / NBRC 15819 / NCTC 12168 / Alc 37)</name>
    <name type="common">Ochrobactrum anthropi</name>
    <dbReference type="NCBI Taxonomy" id="439375"/>
    <lineage>
        <taxon>Bacteria</taxon>
        <taxon>Pseudomonadati</taxon>
        <taxon>Pseudomonadota</taxon>
        <taxon>Alphaproteobacteria</taxon>
        <taxon>Hyphomicrobiales</taxon>
        <taxon>Brucellaceae</taxon>
        <taxon>Brucella/Ochrobactrum group</taxon>
        <taxon>Brucella</taxon>
    </lineage>
</organism>
<reference key="1">
    <citation type="journal article" date="2011" name="J. Bacteriol.">
        <title>Genome of Ochrobactrum anthropi ATCC 49188 T, a versatile opportunistic pathogen and symbiont of several eukaryotic hosts.</title>
        <authorList>
            <person name="Chain P.S."/>
            <person name="Lang D.M."/>
            <person name="Comerci D.J."/>
            <person name="Malfatti S.A."/>
            <person name="Vergez L.M."/>
            <person name="Shin M."/>
            <person name="Ugalde R.A."/>
            <person name="Garcia E."/>
            <person name="Tolmasky M.E."/>
        </authorList>
    </citation>
    <scope>NUCLEOTIDE SEQUENCE [LARGE SCALE GENOMIC DNA]</scope>
    <source>
        <strain>ATCC 49188 / DSM 6882 / CCUG 24695 / JCM 21032 / LMG 3331 / NBRC 15819 / NCTC 12168 / Alc 37</strain>
    </source>
</reference>
<evidence type="ECO:0000255" key="1">
    <source>
        <dbReference type="HAMAP-Rule" id="MF_00019"/>
    </source>
</evidence>
<accession>A6X1X9</accession>
<dbReference type="EC" id="2.3.1.274" evidence="1"/>
<dbReference type="EMBL" id="CP000758">
    <property type="protein sequence ID" value="ABS15233.1"/>
    <property type="molecule type" value="Genomic_DNA"/>
</dbReference>
<dbReference type="RefSeq" id="WP_010661100.1">
    <property type="nucleotide sequence ID" value="NC_009667.1"/>
</dbReference>
<dbReference type="SMR" id="A6X1X9"/>
<dbReference type="STRING" id="439375.Oant_2520"/>
<dbReference type="GeneID" id="61317022"/>
<dbReference type="KEGG" id="oan:Oant_2520"/>
<dbReference type="eggNOG" id="COG0416">
    <property type="taxonomic scope" value="Bacteria"/>
</dbReference>
<dbReference type="HOGENOM" id="CLU_039379_1_0_5"/>
<dbReference type="PhylomeDB" id="A6X1X9"/>
<dbReference type="UniPathway" id="UPA00085"/>
<dbReference type="Proteomes" id="UP000002301">
    <property type="component" value="Chromosome 1"/>
</dbReference>
<dbReference type="GO" id="GO:0005737">
    <property type="term" value="C:cytoplasm"/>
    <property type="evidence" value="ECO:0007669"/>
    <property type="project" value="UniProtKB-SubCell"/>
</dbReference>
<dbReference type="GO" id="GO:0043811">
    <property type="term" value="F:phosphate:acyl-[acyl carrier protein] acyltransferase activity"/>
    <property type="evidence" value="ECO:0007669"/>
    <property type="project" value="UniProtKB-UniRule"/>
</dbReference>
<dbReference type="GO" id="GO:0006633">
    <property type="term" value="P:fatty acid biosynthetic process"/>
    <property type="evidence" value="ECO:0007669"/>
    <property type="project" value="UniProtKB-UniRule"/>
</dbReference>
<dbReference type="GO" id="GO:0008654">
    <property type="term" value="P:phospholipid biosynthetic process"/>
    <property type="evidence" value="ECO:0007669"/>
    <property type="project" value="UniProtKB-KW"/>
</dbReference>
<dbReference type="Gene3D" id="3.40.718.10">
    <property type="entry name" value="Isopropylmalate Dehydrogenase"/>
    <property type="match status" value="1"/>
</dbReference>
<dbReference type="HAMAP" id="MF_00019">
    <property type="entry name" value="PlsX"/>
    <property type="match status" value="1"/>
</dbReference>
<dbReference type="InterPro" id="IPR003664">
    <property type="entry name" value="FA_synthesis"/>
</dbReference>
<dbReference type="InterPro" id="IPR012281">
    <property type="entry name" value="Phospholipid_synth_PlsX-like"/>
</dbReference>
<dbReference type="NCBIfam" id="TIGR00182">
    <property type="entry name" value="plsX"/>
    <property type="match status" value="1"/>
</dbReference>
<dbReference type="PANTHER" id="PTHR30100">
    <property type="entry name" value="FATTY ACID/PHOSPHOLIPID SYNTHESIS PROTEIN PLSX"/>
    <property type="match status" value="1"/>
</dbReference>
<dbReference type="PANTHER" id="PTHR30100:SF1">
    <property type="entry name" value="PHOSPHATE ACYLTRANSFERASE"/>
    <property type="match status" value="1"/>
</dbReference>
<dbReference type="Pfam" id="PF02504">
    <property type="entry name" value="FA_synthesis"/>
    <property type="match status" value="1"/>
</dbReference>
<dbReference type="PIRSF" id="PIRSF002465">
    <property type="entry name" value="Phsphlp_syn_PlsX"/>
    <property type="match status" value="1"/>
</dbReference>
<dbReference type="SUPFAM" id="SSF53659">
    <property type="entry name" value="Isocitrate/Isopropylmalate dehydrogenase-like"/>
    <property type="match status" value="1"/>
</dbReference>